<organism>
    <name type="scientific">Bacillus anthracis (strain A0248)</name>
    <dbReference type="NCBI Taxonomy" id="592021"/>
    <lineage>
        <taxon>Bacteria</taxon>
        <taxon>Bacillati</taxon>
        <taxon>Bacillota</taxon>
        <taxon>Bacilli</taxon>
        <taxon>Bacillales</taxon>
        <taxon>Bacillaceae</taxon>
        <taxon>Bacillus</taxon>
        <taxon>Bacillus cereus group</taxon>
    </lineage>
</organism>
<keyword id="KW-0687">Ribonucleoprotein</keyword>
<keyword id="KW-0689">Ribosomal protein</keyword>
<keyword id="KW-0694">RNA-binding</keyword>
<keyword id="KW-0699">rRNA-binding</keyword>
<dbReference type="EMBL" id="CP001598">
    <property type="protein sequence ID" value="ACQ50148.1"/>
    <property type="molecule type" value="Genomic_DNA"/>
</dbReference>
<dbReference type="RefSeq" id="WP_000918874.1">
    <property type="nucleotide sequence ID" value="NC_012659.1"/>
</dbReference>
<dbReference type="SMR" id="C3P3E3"/>
<dbReference type="GeneID" id="92885945"/>
<dbReference type="KEGG" id="bai:BAA_5756"/>
<dbReference type="HOGENOM" id="CLU_148710_2_2_9"/>
<dbReference type="GO" id="GO:0022627">
    <property type="term" value="C:cytosolic small ribosomal subunit"/>
    <property type="evidence" value="ECO:0007669"/>
    <property type="project" value="TreeGrafter"/>
</dbReference>
<dbReference type="GO" id="GO:0070181">
    <property type="term" value="F:small ribosomal subunit rRNA binding"/>
    <property type="evidence" value="ECO:0007669"/>
    <property type="project" value="TreeGrafter"/>
</dbReference>
<dbReference type="GO" id="GO:0003735">
    <property type="term" value="F:structural constituent of ribosome"/>
    <property type="evidence" value="ECO:0007669"/>
    <property type="project" value="InterPro"/>
</dbReference>
<dbReference type="GO" id="GO:0006412">
    <property type="term" value="P:translation"/>
    <property type="evidence" value="ECO:0007669"/>
    <property type="project" value="UniProtKB-UniRule"/>
</dbReference>
<dbReference type="FunFam" id="4.10.640.10:FF:000003">
    <property type="entry name" value="30S ribosomal protein S18"/>
    <property type="match status" value="1"/>
</dbReference>
<dbReference type="Gene3D" id="4.10.640.10">
    <property type="entry name" value="Ribosomal protein S18"/>
    <property type="match status" value="1"/>
</dbReference>
<dbReference type="HAMAP" id="MF_00270">
    <property type="entry name" value="Ribosomal_bS18"/>
    <property type="match status" value="1"/>
</dbReference>
<dbReference type="InterPro" id="IPR001648">
    <property type="entry name" value="Ribosomal_bS18"/>
</dbReference>
<dbReference type="InterPro" id="IPR018275">
    <property type="entry name" value="Ribosomal_bS18_CS"/>
</dbReference>
<dbReference type="InterPro" id="IPR036870">
    <property type="entry name" value="Ribosomal_bS18_sf"/>
</dbReference>
<dbReference type="NCBIfam" id="TIGR00165">
    <property type="entry name" value="S18"/>
    <property type="match status" value="1"/>
</dbReference>
<dbReference type="PANTHER" id="PTHR13479">
    <property type="entry name" value="30S RIBOSOMAL PROTEIN S18"/>
    <property type="match status" value="1"/>
</dbReference>
<dbReference type="PANTHER" id="PTHR13479:SF40">
    <property type="entry name" value="SMALL RIBOSOMAL SUBUNIT PROTEIN BS18M"/>
    <property type="match status" value="1"/>
</dbReference>
<dbReference type="Pfam" id="PF01084">
    <property type="entry name" value="Ribosomal_S18"/>
    <property type="match status" value="1"/>
</dbReference>
<dbReference type="PRINTS" id="PR00974">
    <property type="entry name" value="RIBOSOMALS18"/>
</dbReference>
<dbReference type="SUPFAM" id="SSF46911">
    <property type="entry name" value="Ribosomal protein S18"/>
    <property type="match status" value="1"/>
</dbReference>
<dbReference type="PROSITE" id="PS00057">
    <property type="entry name" value="RIBOSOMAL_S18"/>
    <property type="match status" value="1"/>
</dbReference>
<accession>C3P3E3</accession>
<sequence>MAGRKGGRAKRRKVCFFTSNGITRIDYKDVDLLKRFVSERGKILPRRVTGTSAKYQRKLTVAIKRARQMALLPYVGE</sequence>
<reference key="1">
    <citation type="submission" date="2009-04" db="EMBL/GenBank/DDBJ databases">
        <title>Genome sequence of Bacillus anthracis A0248.</title>
        <authorList>
            <person name="Dodson R.J."/>
            <person name="Munk A.C."/>
            <person name="Bruce D."/>
            <person name="Detter C."/>
            <person name="Tapia R."/>
            <person name="Sutton G."/>
            <person name="Sims D."/>
            <person name="Brettin T."/>
        </authorList>
    </citation>
    <scope>NUCLEOTIDE SEQUENCE [LARGE SCALE GENOMIC DNA]</scope>
    <source>
        <strain>A0248</strain>
    </source>
</reference>
<comment type="function">
    <text evidence="1">Binds as a heterodimer with protein bS6 to the central domain of the 16S rRNA, where it helps stabilize the platform of the 30S subunit.</text>
</comment>
<comment type="subunit">
    <text evidence="1">Part of the 30S ribosomal subunit. Forms a tight heterodimer with protein bS6.</text>
</comment>
<comment type="similarity">
    <text evidence="1">Belongs to the bacterial ribosomal protein bS18 family.</text>
</comment>
<feature type="chain" id="PRO_1000196514" description="Small ribosomal subunit protein bS18">
    <location>
        <begin position="1"/>
        <end position="77"/>
    </location>
</feature>
<proteinExistence type="inferred from homology"/>
<protein>
    <recommendedName>
        <fullName evidence="1">Small ribosomal subunit protein bS18</fullName>
    </recommendedName>
    <alternativeName>
        <fullName evidence="2">30S ribosomal protein S18</fullName>
    </alternativeName>
</protein>
<gene>
    <name evidence="1" type="primary">rpsR</name>
    <name type="ordered locus">BAA_5756</name>
</gene>
<evidence type="ECO:0000255" key="1">
    <source>
        <dbReference type="HAMAP-Rule" id="MF_00270"/>
    </source>
</evidence>
<evidence type="ECO:0000305" key="2"/>
<name>RS18_BACAA</name>